<protein>
    <recommendedName>
        <fullName>Uncharacterized MFS-type transporter YcaD</fullName>
    </recommendedName>
</protein>
<gene>
    <name type="primary">ycaD</name>
    <name type="ordered locus">SF0857</name>
    <name type="ordered locus">S0898</name>
</gene>
<organism>
    <name type="scientific">Shigella flexneri</name>
    <dbReference type="NCBI Taxonomy" id="623"/>
    <lineage>
        <taxon>Bacteria</taxon>
        <taxon>Pseudomonadati</taxon>
        <taxon>Pseudomonadota</taxon>
        <taxon>Gammaproteobacteria</taxon>
        <taxon>Enterobacterales</taxon>
        <taxon>Enterobacteriaceae</taxon>
        <taxon>Shigella</taxon>
    </lineage>
</organism>
<dbReference type="EMBL" id="AE005674">
    <property type="protein sequence ID" value="AAN42490.1"/>
    <property type="molecule type" value="Genomic_DNA"/>
</dbReference>
<dbReference type="EMBL" id="AE014073">
    <property type="protein sequence ID" value="AAP16362.1"/>
    <property type="molecule type" value="Genomic_DNA"/>
</dbReference>
<dbReference type="RefSeq" id="NP_706783.1">
    <property type="nucleotide sequence ID" value="NC_004337.2"/>
</dbReference>
<dbReference type="RefSeq" id="WP_000109301.1">
    <property type="nucleotide sequence ID" value="NZ_WPGW01000037.1"/>
</dbReference>
<dbReference type="SMR" id="Q83RZ5"/>
<dbReference type="STRING" id="198214.SF0857"/>
<dbReference type="PaxDb" id="198214-SF0857"/>
<dbReference type="GeneID" id="1023857"/>
<dbReference type="KEGG" id="sfl:SF0857"/>
<dbReference type="KEGG" id="sfx:S0898"/>
<dbReference type="PATRIC" id="fig|198214.7.peg.989"/>
<dbReference type="HOGENOM" id="CLU_035018_1_2_6"/>
<dbReference type="Proteomes" id="UP000001006">
    <property type="component" value="Chromosome"/>
</dbReference>
<dbReference type="Proteomes" id="UP000002673">
    <property type="component" value="Chromosome"/>
</dbReference>
<dbReference type="GO" id="GO:0005886">
    <property type="term" value="C:plasma membrane"/>
    <property type="evidence" value="ECO:0007669"/>
    <property type="project" value="UniProtKB-SubCell"/>
</dbReference>
<dbReference type="GO" id="GO:0022857">
    <property type="term" value="F:transmembrane transporter activity"/>
    <property type="evidence" value="ECO:0007669"/>
    <property type="project" value="UniProtKB-UniRule"/>
</dbReference>
<dbReference type="CDD" id="cd17477">
    <property type="entry name" value="MFS_YcaD_like"/>
    <property type="match status" value="1"/>
</dbReference>
<dbReference type="FunFam" id="1.20.1250.20:FF:000041">
    <property type="entry name" value="Uncharacterized MFS-type transporter YcaD"/>
    <property type="match status" value="1"/>
</dbReference>
<dbReference type="FunFam" id="1.20.1250.20:FF:000066">
    <property type="entry name" value="Uncharacterized MFS-type transporter YcaD"/>
    <property type="match status" value="1"/>
</dbReference>
<dbReference type="Gene3D" id="1.20.1250.20">
    <property type="entry name" value="MFS general substrate transporter like domains"/>
    <property type="match status" value="2"/>
</dbReference>
<dbReference type="HAMAP" id="MF_01149">
    <property type="entry name" value="MFS_YcaD"/>
    <property type="match status" value="1"/>
</dbReference>
<dbReference type="InterPro" id="IPR011701">
    <property type="entry name" value="MFS"/>
</dbReference>
<dbReference type="InterPro" id="IPR020846">
    <property type="entry name" value="MFS_dom"/>
</dbReference>
<dbReference type="InterPro" id="IPR036259">
    <property type="entry name" value="MFS_trans_sf"/>
</dbReference>
<dbReference type="InterPro" id="IPR023745">
    <property type="entry name" value="MFS_YcaD"/>
</dbReference>
<dbReference type="InterPro" id="IPR047200">
    <property type="entry name" value="MFS_YcaD-like"/>
</dbReference>
<dbReference type="NCBIfam" id="NF002962">
    <property type="entry name" value="PRK03633.1"/>
    <property type="match status" value="1"/>
</dbReference>
<dbReference type="PANTHER" id="PTHR23521">
    <property type="entry name" value="TRANSPORTER MFS SUPERFAMILY"/>
    <property type="match status" value="1"/>
</dbReference>
<dbReference type="PANTHER" id="PTHR23521:SF2">
    <property type="entry name" value="TRANSPORTER MFS SUPERFAMILY"/>
    <property type="match status" value="1"/>
</dbReference>
<dbReference type="Pfam" id="PF07690">
    <property type="entry name" value="MFS_1"/>
    <property type="match status" value="1"/>
</dbReference>
<dbReference type="SUPFAM" id="SSF103473">
    <property type="entry name" value="MFS general substrate transporter"/>
    <property type="match status" value="1"/>
</dbReference>
<dbReference type="PROSITE" id="PS50850">
    <property type="entry name" value="MFS"/>
    <property type="match status" value="1"/>
</dbReference>
<name>YCAD_SHIFL</name>
<keyword id="KW-0997">Cell inner membrane</keyword>
<keyword id="KW-1003">Cell membrane</keyword>
<keyword id="KW-0472">Membrane</keyword>
<keyword id="KW-1185">Reference proteome</keyword>
<keyword id="KW-0812">Transmembrane</keyword>
<keyword id="KW-1133">Transmembrane helix</keyword>
<keyword id="KW-0813">Transport</keyword>
<sequence>MSTYTRPVMLLLSGLLLLTLAIAVLNTLVPLWLAQEHMSTWQVGVVSSSYFTGNLVGTLLTGYVIKRIGFNRSYYLSSFIFAAGCAGLGLMIGFWSWLAWRFVAGVGCAMIWVVVESALMCSGTSRNRGRLLAAYMMVYYVGTFLGQLLVSKVSTELMSVLPWVTGLTLAGILPLLFTRVLNQQAENHDSTSITAMLKLRQARLGVNGCIISGIVLGSLYGLMPLYLNHKGVSNASIGFWMAVLVSAGILGQWPIGRLADKFGRLLVLRVQVFVVILGSIAMLSQAAMAPALFILGAAGFTLYPVAMAWACEKVEHHQLVAMNQALLLSYTVGSLLGPSFSAMLMQNFSDNLLFIMIASVSFIYLLMLLRNAGHTPKPVAHV</sequence>
<evidence type="ECO:0000250" key="1"/>
<evidence type="ECO:0000255" key="2"/>
<evidence type="ECO:0000305" key="3"/>
<proteinExistence type="inferred from homology"/>
<accession>Q83RZ5</accession>
<comment type="subcellular location">
    <subcellularLocation>
        <location evidence="1">Cell inner membrane</location>
        <topology evidence="1">Multi-pass membrane protein</topology>
    </subcellularLocation>
</comment>
<comment type="similarity">
    <text evidence="3">Belongs to the major facilitator superfamily. YcaD (TC 2.A.1.26) family.</text>
</comment>
<reference key="1">
    <citation type="journal article" date="2002" name="Nucleic Acids Res.">
        <title>Genome sequence of Shigella flexneri 2a: insights into pathogenicity through comparison with genomes of Escherichia coli K12 and O157.</title>
        <authorList>
            <person name="Jin Q."/>
            <person name="Yuan Z."/>
            <person name="Xu J."/>
            <person name="Wang Y."/>
            <person name="Shen Y."/>
            <person name="Lu W."/>
            <person name="Wang J."/>
            <person name="Liu H."/>
            <person name="Yang J."/>
            <person name="Yang F."/>
            <person name="Zhang X."/>
            <person name="Zhang J."/>
            <person name="Yang G."/>
            <person name="Wu H."/>
            <person name="Qu D."/>
            <person name="Dong J."/>
            <person name="Sun L."/>
            <person name="Xue Y."/>
            <person name="Zhao A."/>
            <person name="Gao Y."/>
            <person name="Zhu J."/>
            <person name="Kan B."/>
            <person name="Ding K."/>
            <person name="Chen S."/>
            <person name="Cheng H."/>
            <person name="Yao Z."/>
            <person name="He B."/>
            <person name="Chen R."/>
            <person name="Ma D."/>
            <person name="Qiang B."/>
            <person name="Wen Y."/>
            <person name="Hou Y."/>
            <person name="Yu J."/>
        </authorList>
    </citation>
    <scope>NUCLEOTIDE SEQUENCE [LARGE SCALE GENOMIC DNA]</scope>
    <source>
        <strain>301 / Serotype 2a</strain>
    </source>
</reference>
<reference key="2">
    <citation type="journal article" date="2003" name="Infect. Immun.">
        <title>Complete genome sequence and comparative genomics of Shigella flexneri serotype 2a strain 2457T.</title>
        <authorList>
            <person name="Wei J."/>
            <person name="Goldberg M.B."/>
            <person name="Burland V."/>
            <person name="Venkatesan M.M."/>
            <person name="Deng W."/>
            <person name="Fournier G."/>
            <person name="Mayhew G.F."/>
            <person name="Plunkett G. III"/>
            <person name="Rose D.J."/>
            <person name="Darling A."/>
            <person name="Mau B."/>
            <person name="Perna N.T."/>
            <person name="Payne S.M."/>
            <person name="Runyen-Janecky L.J."/>
            <person name="Zhou S."/>
            <person name="Schwartz D.C."/>
            <person name="Blattner F.R."/>
        </authorList>
    </citation>
    <scope>NUCLEOTIDE SEQUENCE [LARGE SCALE GENOMIC DNA]</scope>
    <source>
        <strain>ATCC 700930 / 2457T / Serotype 2a</strain>
    </source>
</reference>
<feature type="chain" id="PRO_0000084894" description="Uncharacterized MFS-type transporter YcaD">
    <location>
        <begin position="1"/>
        <end position="382"/>
    </location>
</feature>
<feature type="topological domain" description="Cytoplasmic" evidence="2">
    <location>
        <begin position="1"/>
        <end position="13"/>
    </location>
</feature>
<feature type="transmembrane region" description="Helical" evidence="2">
    <location>
        <begin position="14"/>
        <end position="34"/>
    </location>
</feature>
<feature type="topological domain" description="Periplasmic" evidence="2">
    <location>
        <begin position="35"/>
        <end position="44"/>
    </location>
</feature>
<feature type="transmembrane region" description="Helical" evidence="2">
    <location>
        <begin position="45"/>
        <end position="65"/>
    </location>
</feature>
<feature type="topological domain" description="Cytoplasmic" evidence="2">
    <location>
        <begin position="66"/>
        <end position="78"/>
    </location>
</feature>
<feature type="transmembrane region" description="Helical" evidence="2">
    <location>
        <begin position="79"/>
        <end position="99"/>
    </location>
</feature>
<feature type="topological domain" description="Periplasmic" evidence="2">
    <location>
        <begin position="100"/>
        <end position="101"/>
    </location>
</feature>
<feature type="transmembrane region" description="Helical" evidence="2">
    <location>
        <begin position="102"/>
        <end position="122"/>
    </location>
</feature>
<feature type="topological domain" description="Cytoplasmic" evidence="2">
    <location>
        <begin position="123"/>
        <end position="130"/>
    </location>
</feature>
<feature type="transmembrane region" description="Helical" evidence="2">
    <location>
        <begin position="131"/>
        <end position="151"/>
    </location>
</feature>
<feature type="topological domain" description="Periplasmic" evidence="2">
    <location>
        <begin position="152"/>
        <end position="156"/>
    </location>
</feature>
<feature type="transmembrane region" description="Helical" evidence="2">
    <location>
        <begin position="157"/>
        <end position="177"/>
    </location>
</feature>
<feature type="topological domain" description="Cytoplasmic" evidence="2">
    <location>
        <begin position="178"/>
        <end position="203"/>
    </location>
</feature>
<feature type="transmembrane region" description="Helical" evidence="2">
    <location>
        <begin position="204"/>
        <end position="224"/>
    </location>
</feature>
<feature type="topological domain" description="Periplasmic" evidence="2">
    <location>
        <begin position="225"/>
        <end position="234"/>
    </location>
</feature>
<feature type="transmembrane region" description="Helical" evidence="2">
    <location>
        <begin position="235"/>
        <end position="255"/>
    </location>
</feature>
<feature type="topological domain" description="Cytoplasmic" evidence="2">
    <location>
        <begin position="256"/>
        <end position="269"/>
    </location>
</feature>
<feature type="transmembrane region" description="Helical" evidence="2">
    <location>
        <begin position="270"/>
        <end position="290"/>
    </location>
</feature>
<feature type="transmembrane region" description="Helical" evidence="2">
    <location>
        <begin position="291"/>
        <end position="311"/>
    </location>
</feature>
<feature type="topological domain" description="Cytoplasmic" evidence="2">
    <location>
        <begin position="312"/>
        <end position="324"/>
    </location>
</feature>
<feature type="transmembrane region" description="Helical" evidence="2">
    <location>
        <begin position="325"/>
        <end position="345"/>
    </location>
</feature>
<feature type="topological domain" description="Periplasmic" evidence="2">
    <location>
        <begin position="346"/>
        <end position="347"/>
    </location>
</feature>
<feature type="transmembrane region" description="Helical" evidence="2">
    <location>
        <begin position="348"/>
        <end position="368"/>
    </location>
</feature>
<feature type="topological domain" description="Cytoplasmic" evidence="2">
    <location>
        <begin position="369"/>
        <end position="382"/>
    </location>
</feature>